<name>FTHS_CHLAD</name>
<sequence>MKTSLQIAAEAHLEPIGVIAERLGLPTEYLEPYGRYRGKIDLTFLDDHANRPRGRYILVSAITPTPLGEGKTTTAIGLAMALNRIGKRAVVTLRQSSLGPVFGIKGGGAGGGYSQIVPLAESILHLNGDIHAVSQAHNQLAALTDNSWYHGNPLDIDPDRIEIRRVVDVNDRFLRQVMIGLGGKQNGFPRQTGFDISVASELMAILAMVSGAGAKAALRELRARIGRMVVAFRRDGTPVTAEDVRGAGAATVLMREALKPNLMQTIENTPALIHAGPFANIAQGNSSILADLVALRCAEYTITEAGFGADIGAEKFFNLKCRAGGLWPDAAVIVATVRALKAHSGKYEIVAGKPLPVALLQENPDDVFAGGDNLRRQIANITQFGVPVVVALNTYPEDTATEIEAVAQIATAAGAVGMAVSNVYAAGGAGGVELAKLVARVTERPGPREPKYLYPLEMPLAEKIEVIARRIYGAAGIELSATAAAQLATLTEAGFGNLPICMVKTHLSLSHDPKLRGAPAGFIFPIREVRISAGAGFILPIAGTTVTMPGLGAHPAAHQVDIDDDGNIVGLF</sequence>
<dbReference type="EC" id="6.3.4.3" evidence="1"/>
<dbReference type="EMBL" id="CP001337">
    <property type="protein sequence ID" value="ACL22977.1"/>
    <property type="molecule type" value="Genomic_DNA"/>
</dbReference>
<dbReference type="RefSeq" id="WP_012615343.1">
    <property type="nucleotide sequence ID" value="NC_011831.1"/>
</dbReference>
<dbReference type="SMR" id="B8GC03"/>
<dbReference type="STRING" id="326427.Cagg_0024"/>
<dbReference type="KEGG" id="cag:Cagg_0024"/>
<dbReference type="eggNOG" id="COG2759">
    <property type="taxonomic scope" value="Bacteria"/>
</dbReference>
<dbReference type="HOGENOM" id="CLU_003601_3_3_0"/>
<dbReference type="OrthoDB" id="9761733at2"/>
<dbReference type="UniPathway" id="UPA00193"/>
<dbReference type="Proteomes" id="UP000002508">
    <property type="component" value="Chromosome"/>
</dbReference>
<dbReference type="GO" id="GO:0005524">
    <property type="term" value="F:ATP binding"/>
    <property type="evidence" value="ECO:0007669"/>
    <property type="project" value="UniProtKB-UniRule"/>
</dbReference>
<dbReference type="GO" id="GO:0004329">
    <property type="term" value="F:formate-tetrahydrofolate ligase activity"/>
    <property type="evidence" value="ECO:0007669"/>
    <property type="project" value="UniProtKB-UniRule"/>
</dbReference>
<dbReference type="GO" id="GO:0035999">
    <property type="term" value="P:tetrahydrofolate interconversion"/>
    <property type="evidence" value="ECO:0007669"/>
    <property type="project" value="UniProtKB-UniRule"/>
</dbReference>
<dbReference type="CDD" id="cd00477">
    <property type="entry name" value="FTHFS"/>
    <property type="match status" value="1"/>
</dbReference>
<dbReference type="FunFam" id="3.30.1510.10:FF:000009">
    <property type="entry name" value="Formate--tetrahydrofolate ligase"/>
    <property type="match status" value="1"/>
</dbReference>
<dbReference type="FunFam" id="3.10.410.10:FF:000001">
    <property type="entry name" value="Putative formate--tetrahydrofolate ligase"/>
    <property type="match status" value="1"/>
</dbReference>
<dbReference type="Gene3D" id="3.30.1510.10">
    <property type="entry name" value="Domain 2, N(10)-formyltetrahydrofolate synthetase"/>
    <property type="match status" value="1"/>
</dbReference>
<dbReference type="Gene3D" id="3.10.410.10">
    <property type="entry name" value="Formyltetrahydrofolate synthetase, domain 3"/>
    <property type="match status" value="1"/>
</dbReference>
<dbReference type="Gene3D" id="3.40.50.300">
    <property type="entry name" value="P-loop containing nucleotide triphosphate hydrolases"/>
    <property type="match status" value="1"/>
</dbReference>
<dbReference type="HAMAP" id="MF_01543">
    <property type="entry name" value="FTHFS"/>
    <property type="match status" value="1"/>
</dbReference>
<dbReference type="InterPro" id="IPR000559">
    <property type="entry name" value="Formate_THF_ligase"/>
</dbReference>
<dbReference type="InterPro" id="IPR020628">
    <property type="entry name" value="Formate_THF_ligase_CS"/>
</dbReference>
<dbReference type="InterPro" id="IPR027417">
    <property type="entry name" value="P-loop_NTPase"/>
</dbReference>
<dbReference type="NCBIfam" id="NF010030">
    <property type="entry name" value="PRK13505.1"/>
    <property type="match status" value="1"/>
</dbReference>
<dbReference type="Pfam" id="PF01268">
    <property type="entry name" value="FTHFS"/>
    <property type="match status" value="1"/>
</dbReference>
<dbReference type="SUPFAM" id="SSF52540">
    <property type="entry name" value="P-loop containing nucleoside triphosphate hydrolases"/>
    <property type="match status" value="1"/>
</dbReference>
<dbReference type="PROSITE" id="PS00721">
    <property type="entry name" value="FTHFS_1"/>
    <property type="match status" value="1"/>
</dbReference>
<dbReference type="PROSITE" id="PS00722">
    <property type="entry name" value="FTHFS_2"/>
    <property type="match status" value="1"/>
</dbReference>
<evidence type="ECO:0000255" key="1">
    <source>
        <dbReference type="HAMAP-Rule" id="MF_01543"/>
    </source>
</evidence>
<gene>
    <name evidence="1" type="primary">fhs</name>
    <name type="ordered locus">Cagg_0024</name>
</gene>
<keyword id="KW-0067">ATP-binding</keyword>
<keyword id="KW-0436">Ligase</keyword>
<keyword id="KW-0547">Nucleotide-binding</keyword>
<keyword id="KW-0554">One-carbon metabolism</keyword>
<organism>
    <name type="scientific">Chloroflexus aggregans (strain MD-66 / DSM 9485)</name>
    <dbReference type="NCBI Taxonomy" id="326427"/>
    <lineage>
        <taxon>Bacteria</taxon>
        <taxon>Bacillati</taxon>
        <taxon>Chloroflexota</taxon>
        <taxon>Chloroflexia</taxon>
        <taxon>Chloroflexales</taxon>
        <taxon>Chloroflexineae</taxon>
        <taxon>Chloroflexaceae</taxon>
        <taxon>Chloroflexus</taxon>
    </lineage>
</organism>
<reference key="1">
    <citation type="submission" date="2008-12" db="EMBL/GenBank/DDBJ databases">
        <title>Complete sequence of Chloroflexus aggregans DSM 9485.</title>
        <authorList>
            <consortium name="US DOE Joint Genome Institute"/>
            <person name="Lucas S."/>
            <person name="Copeland A."/>
            <person name="Lapidus A."/>
            <person name="Glavina del Rio T."/>
            <person name="Dalin E."/>
            <person name="Tice H."/>
            <person name="Pitluck S."/>
            <person name="Foster B."/>
            <person name="Larimer F."/>
            <person name="Land M."/>
            <person name="Hauser L."/>
            <person name="Kyrpides N."/>
            <person name="Mikhailova N."/>
            <person name="Bryant D.A."/>
            <person name="Richardson P."/>
        </authorList>
    </citation>
    <scope>NUCLEOTIDE SEQUENCE [LARGE SCALE GENOMIC DNA]</scope>
    <source>
        <strain>MD-66 / DSM 9485</strain>
    </source>
</reference>
<protein>
    <recommendedName>
        <fullName evidence="1">Formate--tetrahydrofolate ligase</fullName>
        <ecNumber evidence="1">6.3.4.3</ecNumber>
    </recommendedName>
    <alternativeName>
        <fullName evidence="1">Formyltetrahydrofolate synthetase</fullName>
        <shortName evidence="1">FHS</shortName>
        <shortName evidence="1">FTHFS</shortName>
    </alternativeName>
</protein>
<proteinExistence type="inferred from homology"/>
<accession>B8GC03</accession>
<comment type="catalytic activity">
    <reaction evidence="1">
        <text>(6S)-5,6,7,8-tetrahydrofolate + formate + ATP = (6R)-10-formyltetrahydrofolate + ADP + phosphate</text>
        <dbReference type="Rhea" id="RHEA:20221"/>
        <dbReference type="ChEBI" id="CHEBI:15740"/>
        <dbReference type="ChEBI" id="CHEBI:30616"/>
        <dbReference type="ChEBI" id="CHEBI:43474"/>
        <dbReference type="ChEBI" id="CHEBI:57453"/>
        <dbReference type="ChEBI" id="CHEBI:195366"/>
        <dbReference type="ChEBI" id="CHEBI:456216"/>
        <dbReference type="EC" id="6.3.4.3"/>
    </reaction>
</comment>
<comment type="pathway">
    <text evidence="1">One-carbon metabolism; tetrahydrofolate interconversion.</text>
</comment>
<comment type="similarity">
    <text evidence="1">Belongs to the formate--tetrahydrofolate ligase family.</text>
</comment>
<feature type="chain" id="PRO_1000185249" description="Formate--tetrahydrofolate ligase">
    <location>
        <begin position="1"/>
        <end position="572"/>
    </location>
</feature>
<feature type="binding site" evidence="1">
    <location>
        <begin position="65"/>
        <end position="72"/>
    </location>
    <ligand>
        <name>ATP</name>
        <dbReference type="ChEBI" id="CHEBI:30616"/>
    </ligand>
</feature>